<comment type="function">
    <text evidence="2 3 4 5">Ca(2+)-dependent actin filament-severing protein that has a regulatory function in exocytosis by affecting the organization of the microfilament network underneath the plasma membrane. In vitro, also has barbed end capping and nucleating activities in the presence of Ca(2+). Severing activity is inhibited by phosphatidylinositol 4,5-bis-phosphate (PIP2) (By similarity). Required for megakaryocyte differentiation, maturation, polyploidization and apoptosis with the release of platelet-like particles (By similarity). Plays a role in osteoclastogenesis (OCG) and actin cytoskeletal organization in osteoclasts (By similarity). Regulates chondrocyte proliferation and differentiation (By similarity). Inhibits cell proliferation and tumorigenesis. Signaling is mediated by MAPK, p38 and JNK pathways (By similarity).</text>
</comment>
<comment type="subcellular location">
    <subcellularLocation>
        <location evidence="4">Cytoplasm</location>
        <location evidence="4">Cytoskeleton</location>
    </subcellularLocation>
    <subcellularLocation>
        <location evidence="4">Cell projection</location>
        <location evidence="4">Podosome</location>
    </subcellularLocation>
</comment>
<comment type="similarity">
    <text evidence="6">Belongs to the villin/gelsolin family.</text>
</comment>
<gene>
    <name type="primary">SCIN</name>
</gene>
<proteinExistence type="evidence at transcript level"/>
<sequence length="125" mass="13971">TSKPVQNRELQGYESTDFXGYFKGGLKYKAGGVASGFNHVLTNXLSAQRLLHVKGRRVVRATEVPLSWDSFNKGDCFIIDLGSEIYQWFGSSCNKYERLKASQVATGIRDNERNGRSQLIVVEEG</sequence>
<dbReference type="EMBL" id="F14654">
    <property type="protein sequence ID" value="CAA23180.1"/>
    <property type="molecule type" value="mRNA"/>
</dbReference>
<dbReference type="STRING" id="9823.ENSSSCP00000042258"/>
<dbReference type="PaxDb" id="9823-ENSSSCP00000016281"/>
<dbReference type="PeptideAtlas" id="Q29297"/>
<dbReference type="eggNOG" id="KOG0443">
    <property type="taxonomic scope" value="Eukaryota"/>
</dbReference>
<dbReference type="InParanoid" id="Q29297"/>
<dbReference type="Proteomes" id="UP000008227">
    <property type="component" value="Unplaced"/>
</dbReference>
<dbReference type="Proteomes" id="UP000314985">
    <property type="component" value="Unplaced"/>
</dbReference>
<dbReference type="Proteomes" id="UP000694570">
    <property type="component" value="Unplaced"/>
</dbReference>
<dbReference type="Proteomes" id="UP000694571">
    <property type="component" value="Unplaced"/>
</dbReference>
<dbReference type="Proteomes" id="UP000694720">
    <property type="component" value="Unplaced"/>
</dbReference>
<dbReference type="Proteomes" id="UP000694722">
    <property type="component" value="Unplaced"/>
</dbReference>
<dbReference type="Proteomes" id="UP000694723">
    <property type="component" value="Unplaced"/>
</dbReference>
<dbReference type="Proteomes" id="UP000694724">
    <property type="component" value="Unplaced"/>
</dbReference>
<dbReference type="Proteomes" id="UP000694725">
    <property type="component" value="Unplaced"/>
</dbReference>
<dbReference type="Proteomes" id="UP000694726">
    <property type="component" value="Unplaced"/>
</dbReference>
<dbReference type="Proteomes" id="UP000694727">
    <property type="component" value="Unplaced"/>
</dbReference>
<dbReference type="Proteomes" id="UP000694728">
    <property type="component" value="Unplaced"/>
</dbReference>
<dbReference type="GO" id="GO:0070161">
    <property type="term" value="C:anchoring junction"/>
    <property type="evidence" value="ECO:0007669"/>
    <property type="project" value="UniProtKB-KW"/>
</dbReference>
<dbReference type="GO" id="GO:0042995">
    <property type="term" value="C:cell projection"/>
    <property type="evidence" value="ECO:0007669"/>
    <property type="project" value="UniProtKB-KW"/>
</dbReference>
<dbReference type="GO" id="GO:0005737">
    <property type="term" value="C:cytoplasm"/>
    <property type="evidence" value="ECO:0007669"/>
    <property type="project" value="UniProtKB-KW"/>
</dbReference>
<dbReference type="GO" id="GO:0002102">
    <property type="term" value="C:podosome"/>
    <property type="evidence" value="ECO:0007669"/>
    <property type="project" value="UniProtKB-SubCell"/>
</dbReference>
<dbReference type="GO" id="GO:0051015">
    <property type="term" value="F:actin filament binding"/>
    <property type="evidence" value="ECO:0007669"/>
    <property type="project" value="InterPro"/>
</dbReference>
<dbReference type="GO" id="GO:0051693">
    <property type="term" value="P:actin filament capping"/>
    <property type="evidence" value="ECO:0007669"/>
    <property type="project" value="UniProtKB-KW"/>
</dbReference>
<dbReference type="GO" id="GO:0032330">
    <property type="term" value="P:regulation of chondrocyte differentiation"/>
    <property type="evidence" value="ECO:0000250"/>
    <property type="project" value="UniProtKB"/>
</dbReference>
<dbReference type="CDD" id="cd11289">
    <property type="entry name" value="gelsolin_S2_like"/>
    <property type="match status" value="1"/>
</dbReference>
<dbReference type="Gene3D" id="3.40.20.10">
    <property type="entry name" value="Severin"/>
    <property type="match status" value="2"/>
</dbReference>
<dbReference type="InterPro" id="IPR029006">
    <property type="entry name" value="ADF-H/Gelsolin-like_dom_sf"/>
</dbReference>
<dbReference type="InterPro" id="IPR007123">
    <property type="entry name" value="Gelsolin-like_dom"/>
</dbReference>
<dbReference type="InterPro" id="IPR007122">
    <property type="entry name" value="Villin/Gelsolin"/>
</dbReference>
<dbReference type="PANTHER" id="PTHR11977:SF78">
    <property type="entry name" value="SCINDERIN"/>
    <property type="match status" value="1"/>
</dbReference>
<dbReference type="PANTHER" id="PTHR11977">
    <property type="entry name" value="VILLIN"/>
    <property type="match status" value="1"/>
</dbReference>
<dbReference type="Pfam" id="PF00626">
    <property type="entry name" value="Gelsolin"/>
    <property type="match status" value="1"/>
</dbReference>
<dbReference type="PRINTS" id="PR00597">
    <property type="entry name" value="GELSOLIN"/>
</dbReference>
<dbReference type="SMART" id="SM00262">
    <property type="entry name" value="GEL"/>
    <property type="match status" value="1"/>
</dbReference>
<dbReference type="SUPFAM" id="SSF55753">
    <property type="entry name" value="Actin depolymerizing proteins"/>
    <property type="match status" value="2"/>
</dbReference>
<reference key="1">
    <citation type="journal article" date="1996" name="Mamm. Genome">
        <title>Evaluation and characterization of a porcine small intestine cDNA library: analysis of 839 clones.</title>
        <authorList>
            <person name="Winteroe A.K."/>
            <person name="Fredholm M."/>
            <person name="Davies W."/>
        </authorList>
    </citation>
    <scope>NUCLEOTIDE SEQUENCE [LARGE SCALE MRNA]</scope>
    <source>
        <tissue>Small intestine</tissue>
    </source>
</reference>
<feature type="chain" id="PRO_0000218746" description="Scinderin">
    <location>
        <begin position="1" status="less than"/>
        <end position="125" status="greater than"/>
    </location>
</feature>
<feature type="repeat" description="Gelsolin-like 1">
    <location>
        <begin position="59"/>
        <end position="99"/>
    </location>
</feature>
<feature type="binding site" evidence="1">
    <location>
        <begin position="23"/>
        <end position="30"/>
    </location>
    <ligand>
        <name>a 1,2-diacyl-sn-glycero-3-phospho-(1D-myo-inositol-4,5-bisphosphate)</name>
        <dbReference type="ChEBI" id="CHEBI:58456"/>
    </ligand>
</feature>
<feature type="binding site" evidence="1">
    <location>
        <begin position="49"/>
        <end position="57"/>
    </location>
    <ligand>
        <name>a 1,2-diacyl-sn-glycero-3-phospho-(1D-myo-inositol-4,5-bisphosphate)</name>
        <dbReference type="ChEBI" id="CHEBI:58456"/>
    </ligand>
</feature>
<feature type="modified residue" description="Phosphotyrosine" evidence="4">
    <location>
        <position position="13"/>
    </location>
</feature>
<feature type="non-terminal residue">
    <location>
        <position position="1"/>
    </location>
</feature>
<feature type="non-terminal residue">
    <location>
        <position position="125"/>
    </location>
</feature>
<name>SCIN_PIG</name>
<keyword id="KW-0117">Actin capping</keyword>
<keyword id="KW-0009">Actin-binding</keyword>
<keyword id="KW-0106">Calcium</keyword>
<keyword id="KW-0965">Cell junction</keyword>
<keyword id="KW-0966">Cell projection</keyword>
<keyword id="KW-0963">Cytoplasm</keyword>
<keyword id="KW-0206">Cytoskeleton</keyword>
<keyword id="KW-0597">Phosphoprotein</keyword>
<keyword id="KW-1185">Reference proteome</keyword>
<keyword id="KW-0677">Repeat</keyword>
<evidence type="ECO:0000250" key="1"/>
<evidence type="ECO:0000250" key="2">
    <source>
        <dbReference type="UniProtKB" id="Q28046"/>
    </source>
</evidence>
<evidence type="ECO:0000250" key="3">
    <source>
        <dbReference type="UniProtKB" id="Q5ZIV9"/>
    </source>
</evidence>
<evidence type="ECO:0000250" key="4">
    <source>
        <dbReference type="UniProtKB" id="Q60604"/>
    </source>
</evidence>
<evidence type="ECO:0000250" key="5">
    <source>
        <dbReference type="UniProtKB" id="Q9Y6U3"/>
    </source>
</evidence>
<evidence type="ECO:0000305" key="6"/>
<protein>
    <recommendedName>
        <fullName>Scinderin</fullName>
    </recommendedName>
    <alternativeName>
        <fullName>Adseverin</fullName>
    </alternativeName>
</protein>
<organism>
    <name type="scientific">Sus scrofa</name>
    <name type="common">Pig</name>
    <dbReference type="NCBI Taxonomy" id="9823"/>
    <lineage>
        <taxon>Eukaryota</taxon>
        <taxon>Metazoa</taxon>
        <taxon>Chordata</taxon>
        <taxon>Craniata</taxon>
        <taxon>Vertebrata</taxon>
        <taxon>Euteleostomi</taxon>
        <taxon>Mammalia</taxon>
        <taxon>Eutheria</taxon>
        <taxon>Laurasiatheria</taxon>
        <taxon>Artiodactyla</taxon>
        <taxon>Suina</taxon>
        <taxon>Suidae</taxon>
        <taxon>Sus</taxon>
    </lineage>
</organism>
<accession>Q29297</accession>